<proteinExistence type="evidence at transcript level"/>
<accession>Q559M5</accession>
<accession>Q75JP8</accession>
<protein>
    <recommendedName>
        <fullName>Frizzled/smoothened-like sans CRD protein E</fullName>
    </recommendedName>
</protein>
<keyword id="KW-0325">Glycoprotein</keyword>
<keyword id="KW-0472">Membrane</keyword>
<keyword id="KW-0675">Receptor</keyword>
<keyword id="KW-1185">Reference proteome</keyword>
<keyword id="KW-0732">Signal</keyword>
<keyword id="KW-0812">Transmembrane</keyword>
<keyword id="KW-1133">Transmembrane helix</keyword>
<sequence length="443" mass="50531">MISHIKKFINLYTIVFLLYILYSNENFFVKGQKLPPGFCPSPLIYRNTTDRQSDIDIGFQFLGETNCVQPCPSLILTENEWNKVFNMSLVAGTISMFALIFLIITYSPLVNNIKDYTRHTVGILFLFSGILIAMTTDGRQLWDIDLGFKKYCPEPGRFARQSDSKCLVTAIFFQFGCVTALLWWAAISVDLWITIKKIKISKKLFIIYTIAVNIVTIVLTFGPVGSKQYGYIDAAIGCWLMDLKYQVGYFWAPVGFCLCVGCVSIVLILKEIYNVSDAVKKKLLAKHLKPLMLIILMLTEFIYMFIFYSYTTSKKNHYHDIIEEYVVCLFVHAANPSVCKIGSTISPSAHFFFHLCIRLMGLEVLIFYGFTRQTRKIWMRSFWFNNSFIKRFLPSISSSNDSKSSNNKTSGRVTGGFGESSEQSNEPEQSIELSGIDDSKHDP</sequence>
<gene>
    <name type="primary">fscE</name>
    <name type="ORF">DDB_G0272306</name>
</gene>
<evidence type="ECO:0000255" key="1"/>
<evidence type="ECO:0000256" key="2">
    <source>
        <dbReference type="SAM" id="MobiDB-lite"/>
    </source>
</evidence>
<evidence type="ECO:0000269" key="3">
    <source>
    </source>
</evidence>
<evidence type="ECO:0000305" key="4"/>
<dbReference type="EMBL" id="AAFI02000008">
    <property type="protein sequence ID" value="EAL71305.1"/>
    <property type="molecule type" value="Genomic_DNA"/>
</dbReference>
<dbReference type="RefSeq" id="XP_645309.1">
    <property type="nucleotide sequence ID" value="XM_640217.1"/>
</dbReference>
<dbReference type="SMR" id="Q559M5"/>
<dbReference type="FunCoup" id="Q559M5">
    <property type="interactions" value="19"/>
</dbReference>
<dbReference type="STRING" id="44689.Q559M5"/>
<dbReference type="GlyCosmos" id="Q559M5">
    <property type="glycosylation" value="1 site, No reported glycans"/>
</dbReference>
<dbReference type="GlyGen" id="Q559M5">
    <property type="glycosylation" value="1 site"/>
</dbReference>
<dbReference type="PaxDb" id="44689-DDB0232059"/>
<dbReference type="EnsemblProtists" id="EAL71305">
    <property type="protein sequence ID" value="EAL71305"/>
    <property type="gene ID" value="DDB_G0272306"/>
</dbReference>
<dbReference type="GeneID" id="8618475"/>
<dbReference type="KEGG" id="ddi:DDB_G0272306"/>
<dbReference type="dictyBase" id="DDB_G0272306">
    <property type="gene designation" value="fscE"/>
</dbReference>
<dbReference type="VEuPathDB" id="AmoebaDB:DDB_G0272306"/>
<dbReference type="HOGENOM" id="CLU_036764_0_0_1"/>
<dbReference type="InParanoid" id="Q559M5"/>
<dbReference type="OMA" id="ASENDSC"/>
<dbReference type="PhylomeDB" id="Q559M5"/>
<dbReference type="PRO" id="PR:Q559M5"/>
<dbReference type="Proteomes" id="UP000002195">
    <property type="component" value="Chromosome 2"/>
</dbReference>
<dbReference type="GO" id="GO:0016020">
    <property type="term" value="C:membrane"/>
    <property type="evidence" value="ECO:0007669"/>
    <property type="project" value="UniProtKB-SubCell"/>
</dbReference>
<dbReference type="Gene3D" id="1.20.1070.10">
    <property type="entry name" value="Rhodopsin 7-helix transmembrane proteins"/>
    <property type="match status" value="1"/>
</dbReference>
<dbReference type="InterPro" id="IPR050949">
    <property type="entry name" value="GPCR_Fz/Smo-like"/>
</dbReference>
<dbReference type="PANTHER" id="PTHR31787:SF8">
    <property type="entry name" value="FRIZZLED_SMOOTHENED-LIKE SANS CRD PROTEIN B-RELATED"/>
    <property type="match status" value="1"/>
</dbReference>
<dbReference type="PANTHER" id="PTHR31787">
    <property type="entry name" value="G-PROTEIN-COUPLED RECEPTOR GPCR FAMILY PROTEIN"/>
    <property type="match status" value="1"/>
</dbReference>
<name>FSCE_DICDI</name>
<comment type="subcellular location">
    <subcellularLocation>
        <location evidence="4">Membrane</location>
        <topology evidence="4">Multi-pass membrane protein</topology>
    </subcellularLocation>
</comment>
<comment type="induction">
    <text evidence="3">Down-regulated by P.aeruginosa, PAO1 strain and PA14 strain infection.</text>
</comment>
<comment type="similarity">
    <text evidence="4">Belongs to the G-protein coupled receptor Fz/Smo family.</text>
</comment>
<reference key="1">
    <citation type="journal article" date="2002" name="Nature">
        <title>Sequence and analysis of chromosome 2 of Dictyostelium discoideum.</title>
        <authorList>
            <person name="Gloeckner G."/>
            <person name="Eichinger L."/>
            <person name="Szafranski K."/>
            <person name="Pachebat J.A."/>
            <person name="Bankier A.T."/>
            <person name="Dear P.H."/>
            <person name="Lehmann R."/>
            <person name="Baumgart C."/>
            <person name="Parra G."/>
            <person name="Abril J.F."/>
            <person name="Guigo R."/>
            <person name="Kumpf K."/>
            <person name="Tunggal B."/>
            <person name="Cox E.C."/>
            <person name="Quail M.A."/>
            <person name="Platzer M."/>
            <person name="Rosenthal A."/>
            <person name="Noegel A.A."/>
        </authorList>
    </citation>
    <scope>NUCLEOTIDE SEQUENCE [LARGE SCALE GENOMIC DNA]</scope>
    <source>
        <strain>AX4</strain>
    </source>
</reference>
<reference key="2">
    <citation type="journal article" date="2005" name="Nature">
        <title>The genome of the social amoeba Dictyostelium discoideum.</title>
        <authorList>
            <person name="Eichinger L."/>
            <person name="Pachebat J.A."/>
            <person name="Gloeckner G."/>
            <person name="Rajandream M.A."/>
            <person name="Sucgang R."/>
            <person name="Berriman M."/>
            <person name="Song J."/>
            <person name="Olsen R."/>
            <person name="Szafranski K."/>
            <person name="Xu Q."/>
            <person name="Tunggal B."/>
            <person name="Kummerfeld S."/>
            <person name="Madera M."/>
            <person name="Konfortov B.A."/>
            <person name="Rivero F."/>
            <person name="Bankier A.T."/>
            <person name="Lehmann R."/>
            <person name="Hamlin N."/>
            <person name="Davies R."/>
            <person name="Gaudet P."/>
            <person name="Fey P."/>
            <person name="Pilcher K."/>
            <person name="Chen G."/>
            <person name="Saunders D."/>
            <person name="Sodergren E.J."/>
            <person name="Davis P."/>
            <person name="Kerhornou A."/>
            <person name="Nie X."/>
            <person name="Hall N."/>
            <person name="Anjard C."/>
            <person name="Hemphill L."/>
            <person name="Bason N."/>
            <person name="Farbrother P."/>
            <person name="Desany B."/>
            <person name="Just E."/>
            <person name="Morio T."/>
            <person name="Rost R."/>
            <person name="Churcher C.M."/>
            <person name="Cooper J."/>
            <person name="Haydock S."/>
            <person name="van Driessche N."/>
            <person name="Cronin A."/>
            <person name="Goodhead I."/>
            <person name="Muzny D.M."/>
            <person name="Mourier T."/>
            <person name="Pain A."/>
            <person name="Lu M."/>
            <person name="Harper D."/>
            <person name="Lindsay R."/>
            <person name="Hauser H."/>
            <person name="James K.D."/>
            <person name="Quiles M."/>
            <person name="Madan Babu M."/>
            <person name="Saito T."/>
            <person name="Buchrieser C."/>
            <person name="Wardroper A."/>
            <person name="Felder M."/>
            <person name="Thangavelu M."/>
            <person name="Johnson D."/>
            <person name="Knights A."/>
            <person name="Loulseged H."/>
            <person name="Mungall K.L."/>
            <person name="Oliver K."/>
            <person name="Price C."/>
            <person name="Quail M.A."/>
            <person name="Urushihara H."/>
            <person name="Hernandez J."/>
            <person name="Rabbinowitsch E."/>
            <person name="Steffen D."/>
            <person name="Sanders M."/>
            <person name="Ma J."/>
            <person name="Kohara Y."/>
            <person name="Sharp S."/>
            <person name="Simmonds M.N."/>
            <person name="Spiegler S."/>
            <person name="Tivey A."/>
            <person name="Sugano S."/>
            <person name="White B."/>
            <person name="Walker D."/>
            <person name="Woodward J.R."/>
            <person name="Winckler T."/>
            <person name="Tanaka Y."/>
            <person name="Shaulsky G."/>
            <person name="Schleicher M."/>
            <person name="Weinstock G.M."/>
            <person name="Rosenthal A."/>
            <person name="Cox E.C."/>
            <person name="Chisholm R.L."/>
            <person name="Gibbs R.A."/>
            <person name="Loomis W.F."/>
            <person name="Platzer M."/>
            <person name="Kay R.R."/>
            <person name="Williams J.G."/>
            <person name="Dear P.H."/>
            <person name="Noegel A.A."/>
            <person name="Barrell B.G."/>
            <person name="Kuspa A."/>
        </authorList>
    </citation>
    <scope>NUCLEOTIDE SEQUENCE [LARGE SCALE GENOMIC DNA]</scope>
    <source>
        <strain>AX4</strain>
    </source>
</reference>
<reference key="3">
    <citation type="journal article" date="2006" name="Eur. J. Cell Biol.">
        <title>The Dictyostelium repertoire of seven transmembrane domain receptors.</title>
        <authorList>
            <person name="Prabhu Y."/>
            <person name="Eichinger L."/>
        </authorList>
    </citation>
    <scope>NOMENCLATURE</scope>
</reference>
<reference key="4">
    <citation type="journal article" date="2008" name="BMC Microbiol.">
        <title>Dictyostelium transcriptional responses to Pseudomonas aeruginosa: common and specific effects from PAO1 and PA14 strains.</title>
        <authorList>
            <person name="Carilla-Latorre S."/>
            <person name="Calvo-Garrido J."/>
            <person name="Bloomfield G."/>
            <person name="Skelton J."/>
            <person name="Kay R.R."/>
            <person name="Ivens A."/>
            <person name="Martinez J.L."/>
            <person name="Escalante R."/>
        </authorList>
    </citation>
    <scope>INDUCTION [LARGE SCALE ANALYSIS]</scope>
</reference>
<organism>
    <name type="scientific">Dictyostelium discoideum</name>
    <name type="common">Social amoeba</name>
    <dbReference type="NCBI Taxonomy" id="44689"/>
    <lineage>
        <taxon>Eukaryota</taxon>
        <taxon>Amoebozoa</taxon>
        <taxon>Evosea</taxon>
        <taxon>Eumycetozoa</taxon>
        <taxon>Dictyostelia</taxon>
        <taxon>Dictyosteliales</taxon>
        <taxon>Dictyosteliaceae</taxon>
        <taxon>Dictyostelium</taxon>
    </lineage>
</organism>
<feature type="signal peptide" evidence="1">
    <location>
        <begin position="1"/>
        <end position="23"/>
    </location>
</feature>
<feature type="chain" id="PRO_0000371358" description="Frizzled/smoothened-like sans CRD protein E">
    <location>
        <begin position="24"/>
        <end position="443"/>
    </location>
</feature>
<feature type="topological domain" description="Extracellular" evidence="1">
    <location>
        <begin position="24"/>
        <end position="83"/>
    </location>
</feature>
<feature type="transmembrane region" description="Helical; Name=1" evidence="1">
    <location>
        <begin position="84"/>
        <end position="104"/>
    </location>
</feature>
<feature type="topological domain" description="Cytoplasmic" evidence="1">
    <location>
        <begin position="105"/>
        <end position="120"/>
    </location>
</feature>
<feature type="transmembrane region" description="Helical; Name=2" evidence="1">
    <location>
        <begin position="121"/>
        <end position="141"/>
    </location>
</feature>
<feature type="topological domain" description="Extracellular" evidence="1">
    <location>
        <begin position="142"/>
        <end position="166"/>
    </location>
</feature>
<feature type="transmembrane region" description="Helical; Name=3" evidence="1">
    <location>
        <begin position="167"/>
        <end position="187"/>
    </location>
</feature>
<feature type="topological domain" description="Cytoplasmic" evidence="1">
    <location>
        <begin position="188"/>
        <end position="203"/>
    </location>
</feature>
<feature type="transmembrane region" description="Helical; Name=4" evidence="1">
    <location>
        <begin position="204"/>
        <end position="224"/>
    </location>
</feature>
<feature type="topological domain" description="Extracellular" evidence="1">
    <location>
        <begin position="225"/>
        <end position="248"/>
    </location>
</feature>
<feature type="transmembrane region" description="Helical; Name=5" evidence="1">
    <location>
        <begin position="249"/>
        <end position="269"/>
    </location>
</feature>
<feature type="topological domain" description="Cytoplasmic" evidence="1">
    <location>
        <begin position="270"/>
        <end position="289"/>
    </location>
</feature>
<feature type="transmembrane region" description="Helical; Name=6" evidence="1">
    <location>
        <begin position="290"/>
        <end position="310"/>
    </location>
</feature>
<feature type="topological domain" description="Extracellular" evidence="1">
    <location>
        <begin position="311"/>
        <end position="350"/>
    </location>
</feature>
<feature type="transmembrane region" description="Helical; Name=7" evidence="1">
    <location>
        <begin position="351"/>
        <end position="371"/>
    </location>
</feature>
<feature type="topological domain" description="Cytoplasmic" evidence="1">
    <location>
        <begin position="372"/>
        <end position="443"/>
    </location>
</feature>
<feature type="region of interest" description="Disordered" evidence="2">
    <location>
        <begin position="397"/>
        <end position="443"/>
    </location>
</feature>
<feature type="compositionally biased region" description="Low complexity" evidence="2">
    <location>
        <begin position="397"/>
        <end position="410"/>
    </location>
</feature>
<feature type="compositionally biased region" description="Low complexity" evidence="2">
    <location>
        <begin position="419"/>
        <end position="432"/>
    </location>
</feature>
<feature type="glycosylation site" description="N-linked (GlcNAc...) asparagine" evidence="1">
    <location>
        <position position="47"/>
    </location>
</feature>